<gene>
    <name evidence="4" type="primary">MFS1</name>
</gene>
<proteinExistence type="evidence at transcript level"/>
<organism>
    <name type="scientific">Ajellomyces capsulatus</name>
    <name type="common">Darling's disease fungus</name>
    <name type="synonym">Histoplasma capsulatum</name>
    <dbReference type="NCBI Taxonomy" id="5037"/>
    <lineage>
        <taxon>Eukaryota</taxon>
        <taxon>Fungi</taxon>
        <taxon>Dikarya</taxon>
        <taxon>Ascomycota</taxon>
        <taxon>Pezizomycotina</taxon>
        <taxon>Eurotiomycetes</taxon>
        <taxon>Eurotiomycetidae</taxon>
        <taxon>Onygenales</taxon>
        <taxon>Ajellomycetaceae</taxon>
        <taxon>Histoplasma</taxon>
    </lineage>
</organism>
<feature type="chain" id="PRO_0000444409" description="MFS siderochrome iron transporter 1">
    <location>
        <begin position="1"/>
        <end position="560"/>
    </location>
</feature>
<feature type="transmembrane region" description="Helical" evidence="1">
    <location>
        <begin position="53"/>
        <end position="73"/>
    </location>
</feature>
<feature type="transmembrane region" description="Helical" evidence="1">
    <location>
        <begin position="90"/>
        <end position="110"/>
    </location>
</feature>
<feature type="transmembrane region" description="Helical" evidence="1">
    <location>
        <begin position="115"/>
        <end position="135"/>
    </location>
</feature>
<feature type="transmembrane region" description="Helical" evidence="1">
    <location>
        <begin position="146"/>
        <end position="166"/>
    </location>
</feature>
<feature type="transmembrane region" description="Helical" evidence="1">
    <location>
        <begin position="177"/>
        <end position="194"/>
    </location>
</feature>
<feature type="transmembrane region" description="Helical" evidence="1">
    <location>
        <begin position="211"/>
        <end position="231"/>
    </location>
</feature>
<feature type="transmembrane region" description="Helical" evidence="1">
    <location>
        <begin position="264"/>
        <end position="284"/>
    </location>
</feature>
<feature type="transmembrane region" description="Helical" evidence="1">
    <location>
        <begin position="291"/>
        <end position="311"/>
    </location>
</feature>
<feature type="transmembrane region" description="Helical" evidence="1">
    <location>
        <begin position="331"/>
        <end position="351"/>
    </location>
</feature>
<feature type="transmembrane region" description="Helical" evidence="1">
    <location>
        <begin position="354"/>
        <end position="374"/>
    </location>
</feature>
<feature type="transmembrane region" description="Helical" evidence="1">
    <location>
        <begin position="379"/>
        <end position="399"/>
    </location>
</feature>
<feature type="transmembrane region" description="Helical" evidence="1">
    <location>
        <begin position="407"/>
        <end position="427"/>
    </location>
</feature>
<feature type="transmembrane region" description="Helical" evidence="1">
    <location>
        <begin position="441"/>
        <end position="461"/>
    </location>
</feature>
<feature type="transmembrane region" description="Helical" evidence="1">
    <location>
        <begin position="522"/>
        <end position="542"/>
    </location>
</feature>
<feature type="glycosylation site" description="N-linked (GlcNAc...) asparagine" evidence="2">
    <location>
        <position position="29"/>
    </location>
</feature>
<feature type="glycosylation site" description="N-linked (GlcNAc...) asparagine" evidence="2">
    <location>
        <position position="404"/>
    </location>
</feature>
<protein>
    <recommendedName>
        <fullName evidence="4">MFS siderochrome iron transporter 1</fullName>
    </recommendedName>
</protein>
<reference key="1">
    <citation type="journal article" date="2008" name="PLoS Pathog.">
        <title>Histoplasma requires SID1, a member of an iron-regulated siderophore gene cluster, for host colonization.</title>
        <authorList>
            <person name="Hwang L.H."/>
            <person name="Mayfield J.A."/>
            <person name="Rine J."/>
            <person name="Sil A."/>
        </authorList>
    </citation>
    <scope>NUCLEOTIDE SEQUENCE [GENOMIC DNA]</scope>
    <scope>FUNCTION</scope>
    <scope>INDUCTION</scope>
    <source>
        <strain>ATCC 26032 / G217B</strain>
    </source>
</reference>
<sequence>MVTLSNVGADVEKNIVPEVNDASKRDSDNASADFQPGVKRVRAVASVWSKKTLWLTFALLYLVAFVDMLLVSVQSTLNPFITSSFEKHGLLASVSIVATILSGCSTLTLAKIVDVWGRIEGFLFMLLVVVVALIMKATCKNMEAYVAAHTLYWTGHIGMIYCVDVMLADMTTLRNRMIMFSINNTPTIASTFAGPKIADLFFSNLNFRWAFGAFAIMLVGVSLPVIVIMLFMERKSVKAGFLVKEKSGRSAWESIKYHLIEFDVVGIVLITASFALILLPFSIVVYAPKGWATGYIIAMEVVGVVCGAIFLAWERFLAPVQFLPFKYLKNPTIIGSCLLYGVMFASALLTITTAGYVLNSFSLSSAILAPGIGLYTGNFKWAAYAGIPFMLLGTALLIPFRQPNTSIGAVTITQVLVGIGTSFFSVCGQLAVMSVVSHQEVAVVLAIWGMFGSIGASVGLAVAGAMWNNILPSQLYRRLPEESKAMAAQIFGDMQLQMSYLDGTPERDAIVGAYADVQRKMVIAGVCMMPLVMASIVIWRNVNIKKQEEEEGSQTTGNIF</sequence>
<keyword id="KW-0325">Glycoprotein</keyword>
<keyword id="KW-0472">Membrane</keyword>
<keyword id="KW-0812">Transmembrane</keyword>
<keyword id="KW-1133">Transmembrane helix</keyword>
<accession>B2KWH5</accession>
<dbReference type="EMBL" id="EU253970">
    <property type="protein sequence ID" value="ACC64448.1"/>
    <property type="molecule type" value="Genomic_DNA"/>
</dbReference>
<dbReference type="SMR" id="B2KWH5"/>
<dbReference type="GlyCosmos" id="B2KWH5">
    <property type="glycosylation" value="2 sites, No reported glycans"/>
</dbReference>
<dbReference type="GO" id="GO:0005886">
    <property type="term" value="C:plasma membrane"/>
    <property type="evidence" value="ECO:0007669"/>
    <property type="project" value="TreeGrafter"/>
</dbReference>
<dbReference type="GO" id="GO:0022857">
    <property type="term" value="F:transmembrane transporter activity"/>
    <property type="evidence" value="ECO:0007669"/>
    <property type="project" value="InterPro"/>
</dbReference>
<dbReference type="Gene3D" id="1.20.1250.20">
    <property type="entry name" value="MFS general substrate transporter like domains"/>
    <property type="match status" value="2"/>
</dbReference>
<dbReference type="InterPro" id="IPR011701">
    <property type="entry name" value="MFS"/>
</dbReference>
<dbReference type="InterPro" id="IPR036259">
    <property type="entry name" value="MFS_trans_sf"/>
</dbReference>
<dbReference type="PANTHER" id="PTHR23501">
    <property type="entry name" value="MAJOR FACILITATOR SUPERFAMILY"/>
    <property type="match status" value="1"/>
</dbReference>
<dbReference type="PANTHER" id="PTHR23501:SF107">
    <property type="entry name" value="TRANSPORTER, PUTATIVE (AFU_ORTHOLOGUE AFUA_7G04730)-RELATED"/>
    <property type="match status" value="1"/>
</dbReference>
<dbReference type="Pfam" id="PF07690">
    <property type="entry name" value="MFS_1"/>
    <property type="match status" value="1"/>
</dbReference>
<dbReference type="SUPFAM" id="SSF103473">
    <property type="entry name" value="MFS general substrate transporter"/>
    <property type="match status" value="1"/>
</dbReference>
<name>MFS1_AJECA</name>
<evidence type="ECO:0000255" key="1"/>
<evidence type="ECO:0000255" key="2">
    <source>
        <dbReference type="PROSITE-ProRule" id="PRU00498"/>
    </source>
</evidence>
<evidence type="ECO:0000269" key="3">
    <source>
    </source>
</evidence>
<evidence type="ECO:0000303" key="4">
    <source>
    </source>
</evidence>
<evidence type="ECO:0000305" key="5"/>
<comment type="function">
    <text evidence="3">Major facilitator transporter involved in siderophore transport (PubMed:18404210).</text>
</comment>
<comment type="subcellular location">
    <subcellularLocation>
        <location evidence="1">Membrane</location>
        <topology evidence="1">Multi-pass membrane protein</topology>
    </subcellularLocation>
</comment>
<comment type="induction">
    <text evidence="3">Expression is induced during iron deprivation (PubMed:18404210).</text>
</comment>
<comment type="similarity">
    <text evidence="5">Belongs to the major facilitator superfamily.</text>
</comment>